<proteinExistence type="inferred from homology"/>
<reference key="1">
    <citation type="journal article" date="2006" name="J. Bacteriol.">
        <title>Pathogenomic sequence analysis of Bacillus cereus and Bacillus thuringiensis isolates closely related to Bacillus anthracis.</title>
        <authorList>
            <person name="Han C.S."/>
            <person name="Xie G."/>
            <person name="Challacombe J.F."/>
            <person name="Altherr M.R."/>
            <person name="Bhotika S.S."/>
            <person name="Bruce D."/>
            <person name="Campbell C.S."/>
            <person name="Campbell M.L."/>
            <person name="Chen J."/>
            <person name="Chertkov O."/>
            <person name="Cleland C."/>
            <person name="Dimitrijevic M."/>
            <person name="Doggett N.A."/>
            <person name="Fawcett J.J."/>
            <person name="Glavina T."/>
            <person name="Goodwin L.A."/>
            <person name="Hill K.K."/>
            <person name="Hitchcock P."/>
            <person name="Jackson P.J."/>
            <person name="Keim P."/>
            <person name="Kewalramani A.R."/>
            <person name="Longmire J."/>
            <person name="Lucas S."/>
            <person name="Malfatti S."/>
            <person name="McMurry K."/>
            <person name="Meincke L.J."/>
            <person name="Misra M."/>
            <person name="Moseman B.L."/>
            <person name="Mundt M."/>
            <person name="Munk A.C."/>
            <person name="Okinaka R.T."/>
            <person name="Parson-Quintana B."/>
            <person name="Reilly L.P."/>
            <person name="Richardson P."/>
            <person name="Robinson D.L."/>
            <person name="Rubin E."/>
            <person name="Saunders E."/>
            <person name="Tapia R."/>
            <person name="Tesmer J.G."/>
            <person name="Thayer N."/>
            <person name="Thompson L.S."/>
            <person name="Tice H."/>
            <person name="Ticknor L.O."/>
            <person name="Wills P.L."/>
            <person name="Brettin T.S."/>
            <person name="Gilna P."/>
        </authorList>
    </citation>
    <scope>NUCLEOTIDE SEQUENCE [LARGE SCALE GENOMIC DNA]</scope>
    <source>
        <strain>97-27</strain>
    </source>
</reference>
<feature type="chain" id="PRO_0000235065" description="4-diphosphocytidyl-2-C-methyl-D-erythritol kinase">
    <location>
        <begin position="1"/>
        <end position="292"/>
    </location>
</feature>
<feature type="active site" evidence="1">
    <location>
        <position position="13"/>
    </location>
</feature>
<feature type="active site" evidence="1">
    <location>
        <position position="139"/>
    </location>
</feature>
<feature type="binding site" evidence="1">
    <location>
        <begin position="97"/>
        <end position="107"/>
    </location>
    <ligand>
        <name>ATP</name>
        <dbReference type="ChEBI" id="CHEBI:30616"/>
    </ligand>
</feature>
<keyword id="KW-0067">ATP-binding</keyword>
<keyword id="KW-0414">Isoprene biosynthesis</keyword>
<keyword id="KW-0418">Kinase</keyword>
<keyword id="KW-0547">Nucleotide-binding</keyword>
<keyword id="KW-0808">Transferase</keyword>
<gene>
    <name evidence="1" type="primary">ispE</name>
    <name type="ordered locus">BT9727_0040</name>
</gene>
<sequence>MNRLKLLVKAPAKINLSLDVLGKRQDGYHEVKMIMTTIDLADRLELMELAEDRIEILSHNRYVPDDQRNLAYQAAKLLKEKFNVKKGVSITIEKTIPVAAGLAGGSSDAAATLRGLNKLWNLGLTIDQLAELGAEIGSDVSFCVYGGTAIATGRGEQIEHIKTPPSCWVILAKPHIGVSTADVYGNLKLNRVTHPNVDKMVDVINAGDYKGICDTVGNVLEDVTFAMHPEVARIKAQMKRFGADAVLMSGSGPTVFGLVHHDSRMHRIYNGLKGFCEQVYAVRLLGERETLE</sequence>
<dbReference type="EC" id="2.7.1.148" evidence="1"/>
<dbReference type="EMBL" id="AE017355">
    <property type="protein sequence ID" value="AAT62198.1"/>
    <property type="molecule type" value="Genomic_DNA"/>
</dbReference>
<dbReference type="RefSeq" id="YP_034398.1">
    <property type="nucleotide sequence ID" value="NC_005957.1"/>
</dbReference>
<dbReference type="SMR" id="Q6HPX2"/>
<dbReference type="KEGG" id="btk:BT9727_0040"/>
<dbReference type="PATRIC" id="fig|281309.8.peg.42"/>
<dbReference type="HOGENOM" id="CLU_053057_1_1_9"/>
<dbReference type="UniPathway" id="UPA00056">
    <property type="reaction ID" value="UER00094"/>
</dbReference>
<dbReference type="Proteomes" id="UP000001301">
    <property type="component" value="Chromosome"/>
</dbReference>
<dbReference type="GO" id="GO:0050515">
    <property type="term" value="F:4-(cytidine 5'-diphospho)-2-C-methyl-D-erythritol kinase activity"/>
    <property type="evidence" value="ECO:0007669"/>
    <property type="project" value="UniProtKB-UniRule"/>
</dbReference>
<dbReference type="GO" id="GO:0005524">
    <property type="term" value="F:ATP binding"/>
    <property type="evidence" value="ECO:0007669"/>
    <property type="project" value="UniProtKB-UniRule"/>
</dbReference>
<dbReference type="GO" id="GO:0019288">
    <property type="term" value="P:isopentenyl diphosphate biosynthetic process, methylerythritol 4-phosphate pathway"/>
    <property type="evidence" value="ECO:0007669"/>
    <property type="project" value="UniProtKB-UniRule"/>
</dbReference>
<dbReference type="GO" id="GO:0016114">
    <property type="term" value="P:terpenoid biosynthetic process"/>
    <property type="evidence" value="ECO:0007669"/>
    <property type="project" value="InterPro"/>
</dbReference>
<dbReference type="FunFam" id="3.30.230.10:FF:000029">
    <property type="entry name" value="4-diphosphocytidyl-2-C-methyl-D-erythritol kinase"/>
    <property type="match status" value="1"/>
</dbReference>
<dbReference type="FunFam" id="3.30.70.890:FF:000006">
    <property type="entry name" value="4-diphosphocytidyl-2-C-methyl-D-erythritol kinase"/>
    <property type="match status" value="1"/>
</dbReference>
<dbReference type="Gene3D" id="3.30.230.10">
    <property type="match status" value="1"/>
</dbReference>
<dbReference type="Gene3D" id="3.30.70.890">
    <property type="entry name" value="GHMP kinase, C-terminal domain"/>
    <property type="match status" value="1"/>
</dbReference>
<dbReference type="HAMAP" id="MF_00061">
    <property type="entry name" value="IspE"/>
    <property type="match status" value="1"/>
</dbReference>
<dbReference type="InterPro" id="IPR013750">
    <property type="entry name" value="GHMP_kinase_C_dom"/>
</dbReference>
<dbReference type="InterPro" id="IPR036554">
    <property type="entry name" value="GHMP_kinase_C_sf"/>
</dbReference>
<dbReference type="InterPro" id="IPR006204">
    <property type="entry name" value="GHMP_kinase_N_dom"/>
</dbReference>
<dbReference type="InterPro" id="IPR004424">
    <property type="entry name" value="IspE"/>
</dbReference>
<dbReference type="InterPro" id="IPR020568">
    <property type="entry name" value="Ribosomal_Su5_D2-typ_SF"/>
</dbReference>
<dbReference type="InterPro" id="IPR014721">
    <property type="entry name" value="Ribsml_uS5_D2-typ_fold_subgr"/>
</dbReference>
<dbReference type="NCBIfam" id="TIGR00154">
    <property type="entry name" value="ispE"/>
    <property type="match status" value="1"/>
</dbReference>
<dbReference type="NCBIfam" id="NF011202">
    <property type="entry name" value="PRK14608.1"/>
    <property type="match status" value="1"/>
</dbReference>
<dbReference type="PANTHER" id="PTHR43527">
    <property type="entry name" value="4-DIPHOSPHOCYTIDYL-2-C-METHYL-D-ERYTHRITOL KINASE, CHLOROPLASTIC"/>
    <property type="match status" value="1"/>
</dbReference>
<dbReference type="PANTHER" id="PTHR43527:SF2">
    <property type="entry name" value="4-DIPHOSPHOCYTIDYL-2-C-METHYL-D-ERYTHRITOL KINASE, CHLOROPLASTIC"/>
    <property type="match status" value="1"/>
</dbReference>
<dbReference type="Pfam" id="PF08544">
    <property type="entry name" value="GHMP_kinases_C"/>
    <property type="match status" value="1"/>
</dbReference>
<dbReference type="Pfam" id="PF00288">
    <property type="entry name" value="GHMP_kinases_N"/>
    <property type="match status" value="1"/>
</dbReference>
<dbReference type="PIRSF" id="PIRSF010376">
    <property type="entry name" value="IspE"/>
    <property type="match status" value="1"/>
</dbReference>
<dbReference type="SUPFAM" id="SSF55060">
    <property type="entry name" value="GHMP Kinase, C-terminal domain"/>
    <property type="match status" value="1"/>
</dbReference>
<dbReference type="SUPFAM" id="SSF54211">
    <property type="entry name" value="Ribosomal protein S5 domain 2-like"/>
    <property type="match status" value="1"/>
</dbReference>
<evidence type="ECO:0000255" key="1">
    <source>
        <dbReference type="HAMAP-Rule" id="MF_00061"/>
    </source>
</evidence>
<organism>
    <name type="scientific">Bacillus thuringiensis subsp. konkukian (strain 97-27)</name>
    <dbReference type="NCBI Taxonomy" id="281309"/>
    <lineage>
        <taxon>Bacteria</taxon>
        <taxon>Bacillati</taxon>
        <taxon>Bacillota</taxon>
        <taxon>Bacilli</taxon>
        <taxon>Bacillales</taxon>
        <taxon>Bacillaceae</taxon>
        <taxon>Bacillus</taxon>
        <taxon>Bacillus cereus group</taxon>
    </lineage>
</organism>
<accession>Q6HPX2</accession>
<protein>
    <recommendedName>
        <fullName evidence="1">4-diphosphocytidyl-2-C-methyl-D-erythritol kinase</fullName>
        <shortName evidence="1">CMK</shortName>
        <ecNumber evidence="1">2.7.1.148</ecNumber>
    </recommendedName>
    <alternativeName>
        <fullName evidence="1">4-(cytidine-5'-diphospho)-2-C-methyl-D-erythritol kinase</fullName>
    </alternativeName>
</protein>
<name>ISPE_BACHK</name>
<comment type="function">
    <text evidence="1">Catalyzes the phosphorylation of the position 2 hydroxy group of 4-diphosphocytidyl-2C-methyl-D-erythritol.</text>
</comment>
<comment type="catalytic activity">
    <reaction evidence="1">
        <text>4-CDP-2-C-methyl-D-erythritol + ATP = 4-CDP-2-C-methyl-D-erythritol 2-phosphate + ADP + H(+)</text>
        <dbReference type="Rhea" id="RHEA:18437"/>
        <dbReference type="ChEBI" id="CHEBI:15378"/>
        <dbReference type="ChEBI" id="CHEBI:30616"/>
        <dbReference type="ChEBI" id="CHEBI:57823"/>
        <dbReference type="ChEBI" id="CHEBI:57919"/>
        <dbReference type="ChEBI" id="CHEBI:456216"/>
        <dbReference type="EC" id="2.7.1.148"/>
    </reaction>
</comment>
<comment type="pathway">
    <text evidence="1">Isoprenoid biosynthesis; isopentenyl diphosphate biosynthesis via DXP pathway; isopentenyl diphosphate from 1-deoxy-D-xylulose 5-phosphate: step 3/6.</text>
</comment>
<comment type="similarity">
    <text evidence="1">Belongs to the GHMP kinase family. IspE subfamily.</text>
</comment>